<evidence type="ECO:0000255" key="1">
    <source>
        <dbReference type="PROSITE-ProRule" id="PRU01182"/>
    </source>
</evidence>
<evidence type="ECO:0000305" key="2"/>
<feature type="chain" id="PRO_0000190741" description="UPF0758 protein M6_Spy0838">
    <location>
        <begin position="1"/>
        <end position="226"/>
    </location>
</feature>
<feature type="domain" description="MPN" evidence="1">
    <location>
        <begin position="103"/>
        <end position="225"/>
    </location>
</feature>
<feature type="short sequence motif" description="JAMM motif" evidence="1">
    <location>
        <begin position="174"/>
        <end position="187"/>
    </location>
</feature>
<feature type="binding site" evidence="1">
    <location>
        <position position="174"/>
    </location>
    <ligand>
        <name>Zn(2+)</name>
        <dbReference type="ChEBI" id="CHEBI:29105"/>
        <note>catalytic</note>
    </ligand>
</feature>
<feature type="binding site" evidence="1">
    <location>
        <position position="176"/>
    </location>
    <ligand>
        <name>Zn(2+)</name>
        <dbReference type="ChEBI" id="CHEBI:29105"/>
        <note>catalytic</note>
    </ligand>
</feature>
<feature type="binding site" evidence="1">
    <location>
        <position position="187"/>
    </location>
    <ligand>
        <name>Zn(2+)</name>
        <dbReference type="ChEBI" id="CHEBI:29105"/>
        <note>catalytic</note>
    </ligand>
</feature>
<comment type="similarity">
    <text evidence="2">Belongs to the UPF0758 family.</text>
</comment>
<organism>
    <name type="scientific">Streptococcus pyogenes serotype M6 (strain ATCC BAA-946 / MGAS10394)</name>
    <dbReference type="NCBI Taxonomy" id="286636"/>
    <lineage>
        <taxon>Bacteria</taxon>
        <taxon>Bacillati</taxon>
        <taxon>Bacillota</taxon>
        <taxon>Bacilli</taxon>
        <taxon>Lactobacillales</taxon>
        <taxon>Streptococcaceae</taxon>
        <taxon>Streptococcus</taxon>
    </lineage>
</organism>
<name>Y838_STRP6</name>
<reference key="1">
    <citation type="journal article" date="2004" name="J. Infect. Dis.">
        <title>Progress toward characterization of the group A Streptococcus metagenome: complete genome sequence of a macrolide-resistant serotype M6 strain.</title>
        <authorList>
            <person name="Banks D.J."/>
            <person name="Porcella S.F."/>
            <person name="Barbian K.D."/>
            <person name="Beres S.B."/>
            <person name="Philips L.E."/>
            <person name="Voyich J.M."/>
            <person name="DeLeo F.R."/>
            <person name="Martin J.M."/>
            <person name="Somerville G.A."/>
            <person name="Musser J.M."/>
        </authorList>
    </citation>
    <scope>NUCLEOTIDE SEQUENCE [LARGE SCALE GENOMIC DNA]</scope>
    <source>
        <strain>ATCC BAA-946 / MGAS10394</strain>
    </source>
</reference>
<gene>
    <name type="ordered locus">M6_Spy0838</name>
</gene>
<keyword id="KW-0378">Hydrolase</keyword>
<keyword id="KW-0479">Metal-binding</keyword>
<keyword id="KW-0482">Metalloprotease</keyword>
<keyword id="KW-0645">Protease</keyword>
<keyword id="KW-0862">Zinc</keyword>
<proteinExistence type="inferred from homology"/>
<sequence length="226" mass="25755">MYSIKCDDNKAMPRERLMRLGAESLSNQELLAILLRTGNKEKHVLELSSYLLSHLDSLADFKKMSLQELQHLAGIGKVKAIEIKAMIELVSRILAIDKTLTDSVLTSVQVAEKMMAALGDKKQEHLVVLYLDNQNRIIEEKTIFIGTVRRSLAEPREILYYACKNMATSLIVIHNHPSGNIEPSSNDYCFTEKIKRSCEDLGIICLDHIIVSYKDYYSFREKSTLF</sequence>
<accession>Q5XC90</accession>
<dbReference type="EMBL" id="CP000003">
    <property type="protein sequence ID" value="AAT86973.1"/>
    <property type="molecule type" value="Genomic_DNA"/>
</dbReference>
<dbReference type="SMR" id="Q5XC90"/>
<dbReference type="KEGG" id="spa:M6_Spy0838"/>
<dbReference type="HOGENOM" id="CLU_073529_0_2_9"/>
<dbReference type="Proteomes" id="UP000001167">
    <property type="component" value="Chromosome"/>
</dbReference>
<dbReference type="GO" id="GO:0046872">
    <property type="term" value="F:metal ion binding"/>
    <property type="evidence" value="ECO:0007669"/>
    <property type="project" value="UniProtKB-KW"/>
</dbReference>
<dbReference type="GO" id="GO:0008237">
    <property type="term" value="F:metallopeptidase activity"/>
    <property type="evidence" value="ECO:0007669"/>
    <property type="project" value="UniProtKB-KW"/>
</dbReference>
<dbReference type="GO" id="GO:0006508">
    <property type="term" value="P:proteolysis"/>
    <property type="evidence" value="ECO:0007669"/>
    <property type="project" value="UniProtKB-KW"/>
</dbReference>
<dbReference type="CDD" id="cd08071">
    <property type="entry name" value="MPN_DUF2466"/>
    <property type="match status" value="1"/>
</dbReference>
<dbReference type="Gene3D" id="3.40.140.10">
    <property type="entry name" value="Cytidine Deaminase, domain 2"/>
    <property type="match status" value="1"/>
</dbReference>
<dbReference type="InterPro" id="IPR037518">
    <property type="entry name" value="MPN"/>
</dbReference>
<dbReference type="InterPro" id="IPR025657">
    <property type="entry name" value="RadC_JAB"/>
</dbReference>
<dbReference type="InterPro" id="IPR010994">
    <property type="entry name" value="RuvA_2-like"/>
</dbReference>
<dbReference type="InterPro" id="IPR001405">
    <property type="entry name" value="UPF0758"/>
</dbReference>
<dbReference type="InterPro" id="IPR020891">
    <property type="entry name" value="UPF0758_CS"/>
</dbReference>
<dbReference type="InterPro" id="IPR046778">
    <property type="entry name" value="UPF0758_N"/>
</dbReference>
<dbReference type="NCBIfam" id="NF000642">
    <property type="entry name" value="PRK00024.1"/>
    <property type="match status" value="1"/>
</dbReference>
<dbReference type="NCBIfam" id="TIGR00608">
    <property type="entry name" value="radc"/>
    <property type="match status" value="1"/>
</dbReference>
<dbReference type="PANTHER" id="PTHR30471">
    <property type="entry name" value="DNA REPAIR PROTEIN RADC"/>
    <property type="match status" value="1"/>
</dbReference>
<dbReference type="PANTHER" id="PTHR30471:SF3">
    <property type="entry name" value="UPF0758 PROTEIN YEES-RELATED"/>
    <property type="match status" value="1"/>
</dbReference>
<dbReference type="Pfam" id="PF04002">
    <property type="entry name" value="RadC"/>
    <property type="match status" value="1"/>
</dbReference>
<dbReference type="Pfam" id="PF20582">
    <property type="entry name" value="UPF0758_N"/>
    <property type="match status" value="1"/>
</dbReference>
<dbReference type="SUPFAM" id="SSF47781">
    <property type="entry name" value="RuvA domain 2-like"/>
    <property type="match status" value="1"/>
</dbReference>
<dbReference type="PROSITE" id="PS50249">
    <property type="entry name" value="MPN"/>
    <property type="match status" value="1"/>
</dbReference>
<dbReference type="PROSITE" id="PS01302">
    <property type="entry name" value="UPF0758"/>
    <property type="match status" value="1"/>
</dbReference>
<protein>
    <recommendedName>
        <fullName>UPF0758 protein M6_Spy0838</fullName>
    </recommendedName>
</protein>